<accession>Q15937</accession>
<accession>Q5VVW1</accession>
<accession>Q96NV1</accession>
<sequence>MLEEGVLPSPGPALPQEENTGEEGMAAGLLTAGPRGSTFFSSVTVAFAQERWRCLVSTPRDRFKEGIPGKSRSLVLLGLPVSQPGMNSQLEQREGAWMLEGEDLRSPSPGWKIISGSPPEQALSEASFQDPCVEMPPGDSDHGTSDLEKSFNLRPVLSPQQRVPVEARPRKCETHTESFKNSEILKPHRAKPYACNECGKAFSYCSSLSQHQKSHTGEKPYECSECGKAFSQSSSLIQHQRIHTGEKPYKCSECGRAFSQNANLTKHQRTHTGEKPYRCSECEKAFSDCSALVQHQRIHTGEKPYECSDCGKAFRHSANLTNHQRTHTGEKPYKCSECGKAFSYCAAFIQHQRIHTGEKPYRCAACGKAFSQSANLTNHQRTHTGEKPYKCSECGKAFSQSTNLIIHQKTHTGEKPYKCNECGKFFSESSALIRHHIIHTGEKPYECNECGKAFNQSSSLSQHQRIHTGVKPYECSECGKAFRCSSAFVRHQRLHAGE</sequence>
<evidence type="ECO:0000255" key="1">
    <source>
        <dbReference type="PROSITE-ProRule" id="PRU00042"/>
    </source>
</evidence>
<evidence type="ECO:0000255" key="2">
    <source>
        <dbReference type="PROSITE-ProRule" id="PRU00119"/>
    </source>
</evidence>
<evidence type="ECO:0000256" key="3">
    <source>
        <dbReference type="SAM" id="MobiDB-lite"/>
    </source>
</evidence>
<evidence type="ECO:0000269" key="4">
    <source>
    </source>
</evidence>
<evidence type="ECO:0000269" key="5">
    <source>
    </source>
</evidence>
<evidence type="ECO:0000305" key="6"/>
<gene>
    <name type="primary">ZNF79</name>
</gene>
<comment type="function">
    <text>May be involved in transcriptional regulation.</text>
</comment>
<comment type="interaction">
    <interactant intactId="EBI-10237274">
        <id>Q15937</id>
    </interactant>
    <interactant intactId="EBI-10699759">
        <id>P61328-2</id>
        <label>FGF12</label>
    </interactant>
    <organismsDiffer>false</organismsDiffer>
    <experiments>3</experiments>
</comment>
<comment type="interaction">
    <interactant intactId="EBI-10237274">
        <id>Q15937</id>
    </interactant>
    <interactant intactId="EBI-1047093">
        <id>O76011</id>
        <label>KRT34</label>
    </interactant>
    <organismsDiffer>false</organismsDiffer>
    <experiments>3</experiments>
</comment>
<comment type="interaction">
    <interactant intactId="EBI-10237274">
        <id>Q15937</id>
    </interactant>
    <interactant intactId="EBI-10171774">
        <id>P60410</id>
        <label>KRTAP10-8</label>
    </interactant>
    <organismsDiffer>false</organismsDiffer>
    <experiments>3</experiments>
</comment>
<comment type="interaction">
    <interactant intactId="EBI-10237274">
        <id>Q15937</id>
    </interactant>
    <interactant intactId="EBI-22311199">
        <id>Q3LI67</id>
        <label>KRTAP6-3</label>
    </interactant>
    <organismsDiffer>false</organismsDiffer>
    <experiments>3</experiments>
</comment>
<comment type="interaction">
    <interactant intactId="EBI-10237274">
        <id>Q15937</id>
    </interactant>
    <interactant intactId="EBI-724076">
        <id>Q99750</id>
        <label>MDFI</label>
    </interactant>
    <organismsDiffer>false</organismsDiffer>
    <experiments>3</experiments>
</comment>
<comment type="interaction">
    <interactant intactId="EBI-10237274">
        <id>Q15937</id>
    </interactant>
    <interactant intactId="EBI-719493">
        <id>P14373</id>
        <label>TRIM27</label>
    </interactant>
    <organismsDiffer>false</organismsDiffer>
    <experiments>3</experiments>
</comment>
<comment type="interaction">
    <interactant intactId="EBI-10237274">
        <id>Q15937</id>
    </interactant>
    <interactant intactId="EBI-716093">
        <id>P13994</id>
        <label>YJU2B</label>
    </interactant>
    <organismsDiffer>false</organismsDiffer>
    <experiments>3</experiments>
</comment>
<comment type="interaction">
    <interactant intactId="EBI-10237274">
        <id>Q15937</id>
    </interactant>
    <interactant intactId="EBI-744471">
        <id>O43167</id>
        <label>ZBTB24</label>
    </interactant>
    <organismsDiffer>false</organismsDiffer>
    <experiments>3</experiments>
</comment>
<comment type="subcellular location">
    <subcellularLocation>
        <location evidence="6">Nucleus</location>
    </subcellularLocation>
</comment>
<comment type="similarity">
    <text evidence="6">Belongs to the krueppel C2H2-type zinc-finger protein family.</text>
</comment>
<protein>
    <recommendedName>
        <fullName>Zinc finger protein 79</fullName>
    </recommendedName>
    <alternativeName>
        <fullName>ZNFpT7</fullName>
    </alternativeName>
</protein>
<reference key="1">
    <citation type="journal article" date="2004" name="Nat. Genet.">
        <title>Complete sequencing and characterization of 21,243 full-length human cDNAs.</title>
        <authorList>
            <person name="Ota T."/>
            <person name="Suzuki Y."/>
            <person name="Nishikawa T."/>
            <person name="Otsuki T."/>
            <person name="Sugiyama T."/>
            <person name="Irie R."/>
            <person name="Wakamatsu A."/>
            <person name="Hayashi K."/>
            <person name="Sato H."/>
            <person name="Nagai K."/>
            <person name="Kimura K."/>
            <person name="Makita H."/>
            <person name="Sekine M."/>
            <person name="Obayashi M."/>
            <person name="Nishi T."/>
            <person name="Shibahara T."/>
            <person name="Tanaka T."/>
            <person name="Ishii S."/>
            <person name="Yamamoto J."/>
            <person name="Saito K."/>
            <person name="Kawai Y."/>
            <person name="Isono Y."/>
            <person name="Nakamura Y."/>
            <person name="Nagahari K."/>
            <person name="Murakami K."/>
            <person name="Yasuda T."/>
            <person name="Iwayanagi T."/>
            <person name="Wagatsuma M."/>
            <person name="Shiratori A."/>
            <person name="Sudo H."/>
            <person name="Hosoiri T."/>
            <person name="Kaku Y."/>
            <person name="Kodaira H."/>
            <person name="Kondo H."/>
            <person name="Sugawara M."/>
            <person name="Takahashi M."/>
            <person name="Kanda K."/>
            <person name="Yokoi T."/>
            <person name="Furuya T."/>
            <person name="Kikkawa E."/>
            <person name="Omura Y."/>
            <person name="Abe K."/>
            <person name="Kamihara K."/>
            <person name="Katsuta N."/>
            <person name="Sato K."/>
            <person name="Tanikawa M."/>
            <person name="Yamazaki M."/>
            <person name="Ninomiya K."/>
            <person name="Ishibashi T."/>
            <person name="Yamashita H."/>
            <person name="Murakawa K."/>
            <person name="Fujimori K."/>
            <person name="Tanai H."/>
            <person name="Kimata M."/>
            <person name="Watanabe M."/>
            <person name="Hiraoka S."/>
            <person name="Chiba Y."/>
            <person name="Ishida S."/>
            <person name="Ono Y."/>
            <person name="Takiguchi S."/>
            <person name="Watanabe S."/>
            <person name="Yosida M."/>
            <person name="Hotuta T."/>
            <person name="Kusano J."/>
            <person name="Kanehori K."/>
            <person name="Takahashi-Fujii A."/>
            <person name="Hara H."/>
            <person name="Tanase T.-O."/>
            <person name="Nomura Y."/>
            <person name="Togiya S."/>
            <person name="Komai F."/>
            <person name="Hara R."/>
            <person name="Takeuchi K."/>
            <person name="Arita M."/>
            <person name="Imose N."/>
            <person name="Musashino K."/>
            <person name="Yuuki H."/>
            <person name="Oshima A."/>
            <person name="Sasaki N."/>
            <person name="Aotsuka S."/>
            <person name="Yoshikawa Y."/>
            <person name="Matsunawa H."/>
            <person name="Ichihara T."/>
            <person name="Shiohata N."/>
            <person name="Sano S."/>
            <person name="Moriya S."/>
            <person name="Momiyama H."/>
            <person name="Satoh N."/>
            <person name="Takami S."/>
            <person name="Terashima Y."/>
            <person name="Suzuki O."/>
            <person name="Nakagawa S."/>
            <person name="Senoh A."/>
            <person name="Mizoguchi H."/>
            <person name="Goto Y."/>
            <person name="Shimizu F."/>
            <person name="Wakebe H."/>
            <person name="Hishigaki H."/>
            <person name="Watanabe T."/>
            <person name="Sugiyama A."/>
            <person name="Takemoto M."/>
            <person name="Kawakami B."/>
            <person name="Yamazaki M."/>
            <person name="Watanabe K."/>
            <person name="Kumagai A."/>
            <person name="Itakura S."/>
            <person name="Fukuzumi Y."/>
            <person name="Fujimori Y."/>
            <person name="Komiyama M."/>
            <person name="Tashiro H."/>
            <person name="Tanigami A."/>
            <person name="Fujiwara T."/>
            <person name="Ono T."/>
            <person name="Yamada K."/>
            <person name="Fujii Y."/>
            <person name="Ozaki K."/>
            <person name="Hirao M."/>
            <person name="Ohmori Y."/>
            <person name="Kawabata A."/>
            <person name="Hikiji T."/>
            <person name="Kobatake N."/>
            <person name="Inagaki H."/>
            <person name="Ikema Y."/>
            <person name="Okamoto S."/>
            <person name="Okitani R."/>
            <person name="Kawakami T."/>
            <person name="Noguchi S."/>
            <person name="Itoh T."/>
            <person name="Shigeta K."/>
            <person name="Senba T."/>
            <person name="Matsumura K."/>
            <person name="Nakajima Y."/>
            <person name="Mizuno T."/>
            <person name="Morinaga M."/>
            <person name="Sasaki M."/>
            <person name="Togashi T."/>
            <person name="Oyama M."/>
            <person name="Hata H."/>
            <person name="Watanabe M."/>
            <person name="Komatsu T."/>
            <person name="Mizushima-Sugano J."/>
            <person name="Satoh T."/>
            <person name="Shirai Y."/>
            <person name="Takahashi Y."/>
            <person name="Nakagawa K."/>
            <person name="Okumura K."/>
            <person name="Nagase T."/>
            <person name="Nomura N."/>
            <person name="Kikuchi H."/>
            <person name="Masuho Y."/>
            <person name="Yamashita R."/>
            <person name="Nakai K."/>
            <person name="Yada T."/>
            <person name="Nakamura Y."/>
            <person name="Ohara O."/>
            <person name="Isogai T."/>
            <person name="Sugano S."/>
        </authorList>
    </citation>
    <scope>NUCLEOTIDE SEQUENCE [LARGE SCALE MRNA]</scope>
    <scope>VARIANTS ILE-31 AND GLY-51</scope>
</reference>
<reference key="2">
    <citation type="journal article" date="2004" name="Nature">
        <title>DNA sequence and analysis of human chromosome 9.</title>
        <authorList>
            <person name="Humphray S.J."/>
            <person name="Oliver K."/>
            <person name="Hunt A.R."/>
            <person name="Plumb R.W."/>
            <person name="Loveland J.E."/>
            <person name="Howe K.L."/>
            <person name="Andrews T.D."/>
            <person name="Searle S."/>
            <person name="Hunt S.E."/>
            <person name="Scott C.E."/>
            <person name="Jones M.C."/>
            <person name="Ainscough R."/>
            <person name="Almeida J.P."/>
            <person name="Ambrose K.D."/>
            <person name="Ashwell R.I.S."/>
            <person name="Babbage A.K."/>
            <person name="Babbage S."/>
            <person name="Bagguley C.L."/>
            <person name="Bailey J."/>
            <person name="Banerjee R."/>
            <person name="Barker D.J."/>
            <person name="Barlow K.F."/>
            <person name="Bates K."/>
            <person name="Beasley H."/>
            <person name="Beasley O."/>
            <person name="Bird C.P."/>
            <person name="Bray-Allen S."/>
            <person name="Brown A.J."/>
            <person name="Brown J.Y."/>
            <person name="Burford D."/>
            <person name="Burrill W."/>
            <person name="Burton J."/>
            <person name="Carder C."/>
            <person name="Carter N.P."/>
            <person name="Chapman J.C."/>
            <person name="Chen Y."/>
            <person name="Clarke G."/>
            <person name="Clark S.Y."/>
            <person name="Clee C.M."/>
            <person name="Clegg S."/>
            <person name="Collier R.E."/>
            <person name="Corby N."/>
            <person name="Crosier M."/>
            <person name="Cummings A.T."/>
            <person name="Davies J."/>
            <person name="Dhami P."/>
            <person name="Dunn M."/>
            <person name="Dutta I."/>
            <person name="Dyer L.W."/>
            <person name="Earthrowl M.E."/>
            <person name="Faulkner L."/>
            <person name="Fleming C.J."/>
            <person name="Frankish A."/>
            <person name="Frankland J.A."/>
            <person name="French L."/>
            <person name="Fricker D.G."/>
            <person name="Garner P."/>
            <person name="Garnett J."/>
            <person name="Ghori J."/>
            <person name="Gilbert J.G.R."/>
            <person name="Glison C."/>
            <person name="Grafham D.V."/>
            <person name="Gribble S."/>
            <person name="Griffiths C."/>
            <person name="Griffiths-Jones S."/>
            <person name="Grocock R."/>
            <person name="Guy J."/>
            <person name="Hall R.E."/>
            <person name="Hammond S."/>
            <person name="Harley J.L."/>
            <person name="Harrison E.S.I."/>
            <person name="Hart E.A."/>
            <person name="Heath P.D."/>
            <person name="Henderson C.D."/>
            <person name="Hopkins B.L."/>
            <person name="Howard P.J."/>
            <person name="Howden P.J."/>
            <person name="Huckle E."/>
            <person name="Johnson C."/>
            <person name="Johnson D."/>
            <person name="Joy A.A."/>
            <person name="Kay M."/>
            <person name="Keenan S."/>
            <person name="Kershaw J.K."/>
            <person name="Kimberley A.M."/>
            <person name="King A."/>
            <person name="Knights A."/>
            <person name="Laird G.K."/>
            <person name="Langford C."/>
            <person name="Lawlor S."/>
            <person name="Leongamornlert D.A."/>
            <person name="Leversha M."/>
            <person name="Lloyd C."/>
            <person name="Lloyd D.M."/>
            <person name="Lovell J."/>
            <person name="Martin S."/>
            <person name="Mashreghi-Mohammadi M."/>
            <person name="Matthews L."/>
            <person name="McLaren S."/>
            <person name="McLay K.E."/>
            <person name="McMurray A."/>
            <person name="Milne S."/>
            <person name="Nickerson T."/>
            <person name="Nisbett J."/>
            <person name="Nordsiek G."/>
            <person name="Pearce A.V."/>
            <person name="Peck A.I."/>
            <person name="Porter K.M."/>
            <person name="Pandian R."/>
            <person name="Pelan S."/>
            <person name="Phillimore B."/>
            <person name="Povey S."/>
            <person name="Ramsey Y."/>
            <person name="Rand V."/>
            <person name="Scharfe M."/>
            <person name="Sehra H.K."/>
            <person name="Shownkeen R."/>
            <person name="Sims S.K."/>
            <person name="Skuce C.D."/>
            <person name="Smith M."/>
            <person name="Steward C.A."/>
            <person name="Swarbreck D."/>
            <person name="Sycamore N."/>
            <person name="Tester J."/>
            <person name="Thorpe A."/>
            <person name="Tracey A."/>
            <person name="Tromans A."/>
            <person name="Thomas D.W."/>
            <person name="Wall M."/>
            <person name="Wallis J.M."/>
            <person name="West A.P."/>
            <person name="Whitehead S.L."/>
            <person name="Willey D.L."/>
            <person name="Williams S.A."/>
            <person name="Wilming L."/>
            <person name="Wray P.W."/>
            <person name="Young L."/>
            <person name="Ashurst J.L."/>
            <person name="Coulson A."/>
            <person name="Blocker H."/>
            <person name="Durbin R.M."/>
            <person name="Sulston J.E."/>
            <person name="Hubbard T."/>
            <person name="Jackson M.J."/>
            <person name="Bentley D.R."/>
            <person name="Beck S."/>
            <person name="Rogers J."/>
            <person name="Dunham I."/>
        </authorList>
    </citation>
    <scope>NUCLEOTIDE SEQUENCE [LARGE SCALE GENOMIC DNA]</scope>
</reference>
<reference key="3">
    <citation type="journal article" date="2004" name="Genome Res.">
        <title>The status, quality, and expansion of the NIH full-length cDNA project: the Mammalian Gene Collection (MGC).</title>
        <authorList>
            <consortium name="The MGC Project Team"/>
        </authorList>
    </citation>
    <scope>NUCLEOTIDE SEQUENCE [LARGE SCALE MRNA]</scope>
    <scope>VARIANTS ILE-31 AND GLY-51</scope>
    <source>
        <tissue>Lung</tissue>
    </source>
</reference>
<reference key="4">
    <citation type="journal article" date="1993" name="Hum. Genet.">
        <title>Chromosomal localization of four human zinc finger cDNAs.</title>
        <authorList>
            <person name="Huebner K."/>
            <person name="Druck T."/>
            <person name="LaForgia S."/>
            <person name="Lasota J."/>
            <person name="Croce C.M."/>
            <person name="Lanfrancone L."/>
            <person name="Donti E."/>
            <person name="Pengue G."/>
            <person name="la Mantia G."/>
            <person name="Pelicci P.-G."/>
            <person name="Lania L."/>
        </authorList>
    </citation>
    <scope>NUCLEOTIDE SEQUENCE [MRNA] OF 345-454</scope>
</reference>
<dbReference type="EMBL" id="AK054606">
    <property type="protein sequence ID" value="BAB70771.1"/>
    <property type="molecule type" value="mRNA"/>
</dbReference>
<dbReference type="EMBL" id="AL445222">
    <property type="status" value="NOT_ANNOTATED_CDS"/>
    <property type="molecule type" value="Genomic_DNA"/>
</dbReference>
<dbReference type="EMBL" id="BC062309">
    <property type="protein sequence ID" value="AAH62309.1"/>
    <property type="molecule type" value="mRNA"/>
</dbReference>
<dbReference type="EMBL" id="X65232">
    <property type="protein sequence ID" value="CAA46339.1"/>
    <property type="molecule type" value="mRNA"/>
</dbReference>
<dbReference type="CCDS" id="CCDS6871.1"/>
<dbReference type="PIR" id="I39315">
    <property type="entry name" value="I39315"/>
</dbReference>
<dbReference type="RefSeq" id="NP_009066.2">
    <property type="nucleotide sequence ID" value="NM_007135.3"/>
</dbReference>
<dbReference type="SMR" id="Q15937"/>
<dbReference type="BioGRID" id="113451">
    <property type="interactions" value="13"/>
</dbReference>
<dbReference type="FunCoup" id="Q15937">
    <property type="interactions" value="82"/>
</dbReference>
<dbReference type="IntAct" id="Q15937">
    <property type="interactions" value="27"/>
</dbReference>
<dbReference type="STRING" id="9606.ENSP00000362446"/>
<dbReference type="iPTMnet" id="Q15937"/>
<dbReference type="PhosphoSitePlus" id="Q15937"/>
<dbReference type="BioMuta" id="ZNF79"/>
<dbReference type="DMDM" id="85681870"/>
<dbReference type="jPOST" id="Q15937"/>
<dbReference type="MassIVE" id="Q15937"/>
<dbReference type="PaxDb" id="9606-ENSP00000362446"/>
<dbReference type="PeptideAtlas" id="Q15937"/>
<dbReference type="ProteomicsDB" id="60821"/>
<dbReference type="Antibodypedia" id="16668">
    <property type="antibodies" value="151 antibodies from 18 providers"/>
</dbReference>
<dbReference type="DNASU" id="7633"/>
<dbReference type="Ensembl" id="ENST00000342483.5">
    <property type="protein sequence ID" value="ENSP00000362446.4"/>
    <property type="gene ID" value="ENSG00000196152.10"/>
</dbReference>
<dbReference type="GeneID" id="7633"/>
<dbReference type="KEGG" id="hsa:7633"/>
<dbReference type="MANE-Select" id="ENST00000342483.5">
    <property type="protein sequence ID" value="ENSP00000362446.4"/>
    <property type="RefSeq nucleotide sequence ID" value="NM_007135.3"/>
    <property type="RefSeq protein sequence ID" value="NP_009066.2"/>
</dbReference>
<dbReference type="UCSC" id="uc004bqw.5">
    <property type="organism name" value="human"/>
</dbReference>
<dbReference type="AGR" id="HGNC:13153"/>
<dbReference type="CTD" id="7633"/>
<dbReference type="GeneCards" id="ZNF79"/>
<dbReference type="HGNC" id="HGNC:13153">
    <property type="gene designation" value="ZNF79"/>
</dbReference>
<dbReference type="HPA" id="ENSG00000196152">
    <property type="expression patterns" value="Low tissue specificity"/>
</dbReference>
<dbReference type="MIM" id="194552">
    <property type="type" value="gene"/>
</dbReference>
<dbReference type="neXtProt" id="NX_Q15937"/>
<dbReference type="OpenTargets" id="ENSG00000196152"/>
<dbReference type="PharmGKB" id="PA37727"/>
<dbReference type="VEuPathDB" id="HostDB:ENSG00000196152"/>
<dbReference type="eggNOG" id="KOG1721">
    <property type="taxonomic scope" value="Eukaryota"/>
</dbReference>
<dbReference type="GeneTree" id="ENSGT00940000163270"/>
<dbReference type="HOGENOM" id="CLU_002678_44_17_1"/>
<dbReference type="InParanoid" id="Q15937"/>
<dbReference type="OMA" id="WKIMSES"/>
<dbReference type="OrthoDB" id="40579at2759"/>
<dbReference type="PAN-GO" id="Q15937">
    <property type="GO annotations" value="3 GO annotations based on evolutionary models"/>
</dbReference>
<dbReference type="PhylomeDB" id="Q15937"/>
<dbReference type="TreeFam" id="TF337055"/>
<dbReference type="PathwayCommons" id="Q15937"/>
<dbReference type="Reactome" id="R-HSA-212436">
    <property type="pathway name" value="Generic Transcription Pathway"/>
</dbReference>
<dbReference type="SignaLink" id="Q15937"/>
<dbReference type="BioGRID-ORCS" id="7633">
    <property type="hits" value="11 hits in 1178 CRISPR screens"/>
</dbReference>
<dbReference type="CD-CODE" id="91857CE7">
    <property type="entry name" value="Nucleolus"/>
</dbReference>
<dbReference type="ChiTaRS" id="ZNF79">
    <property type="organism name" value="human"/>
</dbReference>
<dbReference type="GeneWiki" id="ZNF79"/>
<dbReference type="GenomeRNAi" id="7633"/>
<dbReference type="Pharos" id="Q15937">
    <property type="development level" value="Tbio"/>
</dbReference>
<dbReference type="PRO" id="PR:Q15937"/>
<dbReference type="Proteomes" id="UP000005640">
    <property type="component" value="Chromosome 9"/>
</dbReference>
<dbReference type="RNAct" id="Q15937">
    <property type="molecule type" value="protein"/>
</dbReference>
<dbReference type="Bgee" id="ENSG00000196152">
    <property type="expression patterns" value="Expressed in male germ line stem cell (sensu Vertebrata) in testis and 145 other cell types or tissues"/>
</dbReference>
<dbReference type="ExpressionAtlas" id="Q15937">
    <property type="expression patterns" value="baseline and differential"/>
</dbReference>
<dbReference type="GO" id="GO:0005634">
    <property type="term" value="C:nucleus"/>
    <property type="evidence" value="ECO:0000318"/>
    <property type="project" value="GO_Central"/>
</dbReference>
<dbReference type="GO" id="GO:0000981">
    <property type="term" value="F:DNA-binding transcription factor activity, RNA polymerase II-specific"/>
    <property type="evidence" value="ECO:0000318"/>
    <property type="project" value="GO_Central"/>
</dbReference>
<dbReference type="GO" id="GO:0000977">
    <property type="term" value="F:RNA polymerase II transcription regulatory region sequence-specific DNA binding"/>
    <property type="evidence" value="ECO:0000318"/>
    <property type="project" value="GO_Central"/>
</dbReference>
<dbReference type="GO" id="GO:0008270">
    <property type="term" value="F:zinc ion binding"/>
    <property type="evidence" value="ECO:0007669"/>
    <property type="project" value="UniProtKB-KW"/>
</dbReference>
<dbReference type="GO" id="GO:0006357">
    <property type="term" value="P:regulation of transcription by RNA polymerase II"/>
    <property type="evidence" value="ECO:0000318"/>
    <property type="project" value="GO_Central"/>
</dbReference>
<dbReference type="FunFam" id="3.30.160.60:FF:000144">
    <property type="entry name" value="zinc finger protein 181 isoform X1"/>
    <property type="match status" value="1"/>
</dbReference>
<dbReference type="FunFam" id="3.30.160.60:FF:000944">
    <property type="entry name" value="zinc finger protein 232 isoform X1"/>
    <property type="match status" value="2"/>
</dbReference>
<dbReference type="FunFam" id="3.30.160.60:FF:002259">
    <property type="entry name" value="zinc finger protein 271"/>
    <property type="match status" value="1"/>
</dbReference>
<dbReference type="FunFam" id="3.30.160.60:FF:000352">
    <property type="entry name" value="zinc finger protein 3 homolog"/>
    <property type="match status" value="1"/>
</dbReference>
<dbReference type="FunFam" id="3.30.160.60:FF:002343">
    <property type="entry name" value="Zinc finger protein 33A"/>
    <property type="match status" value="3"/>
</dbReference>
<dbReference type="FunFam" id="3.30.160.60:FF:002090">
    <property type="entry name" value="Zinc finger protein 473"/>
    <property type="match status" value="2"/>
</dbReference>
<dbReference type="FunFam" id="3.30.160.60:FF:000290">
    <property type="entry name" value="Zinc finger protein 697 isoform X1"/>
    <property type="match status" value="1"/>
</dbReference>
<dbReference type="Gene3D" id="3.30.160.60">
    <property type="entry name" value="Classic Zinc Finger"/>
    <property type="match status" value="11"/>
</dbReference>
<dbReference type="InterPro" id="IPR001909">
    <property type="entry name" value="KRAB"/>
</dbReference>
<dbReference type="InterPro" id="IPR036051">
    <property type="entry name" value="KRAB_dom_sf"/>
</dbReference>
<dbReference type="InterPro" id="IPR050527">
    <property type="entry name" value="Snail/Krueppel_Znf"/>
</dbReference>
<dbReference type="InterPro" id="IPR036236">
    <property type="entry name" value="Znf_C2H2_sf"/>
</dbReference>
<dbReference type="InterPro" id="IPR013087">
    <property type="entry name" value="Znf_C2H2_type"/>
</dbReference>
<dbReference type="PANTHER" id="PTHR24388:SF96">
    <property type="entry name" value="GENE, 32687-RELATED"/>
    <property type="match status" value="1"/>
</dbReference>
<dbReference type="PANTHER" id="PTHR24388">
    <property type="entry name" value="ZINC FINGER PROTEIN"/>
    <property type="match status" value="1"/>
</dbReference>
<dbReference type="Pfam" id="PF00096">
    <property type="entry name" value="zf-C2H2"/>
    <property type="match status" value="11"/>
</dbReference>
<dbReference type="SMART" id="SM00349">
    <property type="entry name" value="KRAB"/>
    <property type="match status" value="1"/>
</dbReference>
<dbReference type="SMART" id="SM00355">
    <property type="entry name" value="ZnF_C2H2"/>
    <property type="match status" value="11"/>
</dbReference>
<dbReference type="SUPFAM" id="SSF57667">
    <property type="entry name" value="beta-beta-alpha zinc fingers"/>
    <property type="match status" value="7"/>
</dbReference>
<dbReference type="SUPFAM" id="SSF109640">
    <property type="entry name" value="KRAB domain (Kruppel-associated box)"/>
    <property type="match status" value="1"/>
</dbReference>
<dbReference type="PROSITE" id="PS50805">
    <property type="entry name" value="KRAB"/>
    <property type="match status" value="1"/>
</dbReference>
<dbReference type="PROSITE" id="PS00028">
    <property type="entry name" value="ZINC_FINGER_C2H2_1"/>
    <property type="match status" value="11"/>
</dbReference>
<dbReference type="PROSITE" id="PS50157">
    <property type="entry name" value="ZINC_FINGER_C2H2_2"/>
    <property type="match status" value="11"/>
</dbReference>
<proteinExistence type="evidence at protein level"/>
<keyword id="KW-0238">DNA-binding</keyword>
<keyword id="KW-0479">Metal-binding</keyword>
<keyword id="KW-0539">Nucleus</keyword>
<keyword id="KW-1267">Proteomics identification</keyword>
<keyword id="KW-1185">Reference proteome</keyword>
<keyword id="KW-0677">Repeat</keyword>
<keyword id="KW-0804">Transcription</keyword>
<keyword id="KW-0805">Transcription regulation</keyword>
<keyword id="KW-0862">Zinc</keyword>
<keyword id="KW-0863">Zinc-finger</keyword>
<organism>
    <name type="scientific">Homo sapiens</name>
    <name type="common">Human</name>
    <dbReference type="NCBI Taxonomy" id="9606"/>
    <lineage>
        <taxon>Eukaryota</taxon>
        <taxon>Metazoa</taxon>
        <taxon>Chordata</taxon>
        <taxon>Craniata</taxon>
        <taxon>Vertebrata</taxon>
        <taxon>Euteleostomi</taxon>
        <taxon>Mammalia</taxon>
        <taxon>Eutheria</taxon>
        <taxon>Euarchontoglires</taxon>
        <taxon>Primates</taxon>
        <taxon>Haplorrhini</taxon>
        <taxon>Catarrhini</taxon>
        <taxon>Hominidae</taxon>
        <taxon>Homo</taxon>
    </lineage>
</organism>
<name>ZNF79_HUMAN</name>
<feature type="chain" id="PRO_0000047388" description="Zinc finger protein 79">
    <location>
        <begin position="1"/>
        <end position="498"/>
    </location>
</feature>
<feature type="domain" description="KRAB" evidence="2">
    <location>
        <begin position="38"/>
        <end position="109"/>
    </location>
</feature>
<feature type="zinc finger region" description="C2H2-type 1" evidence="1">
    <location>
        <begin position="193"/>
        <end position="215"/>
    </location>
</feature>
<feature type="zinc finger region" description="C2H2-type 2" evidence="1">
    <location>
        <begin position="221"/>
        <end position="243"/>
    </location>
</feature>
<feature type="zinc finger region" description="C2H2-type 3" evidence="1">
    <location>
        <begin position="249"/>
        <end position="271"/>
    </location>
</feature>
<feature type="zinc finger region" description="C2H2-type 4" evidence="1">
    <location>
        <begin position="277"/>
        <end position="299"/>
    </location>
</feature>
<feature type="zinc finger region" description="C2H2-type 5" evidence="1">
    <location>
        <begin position="305"/>
        <end position="327"/>
    </location>
</feature>
<feature type="zinc finger region" description="C2H2-type 6" evidence="1">
    <location>
        <begin position="333"/>
        <end position="355"/>
    </location>
</feature>
<feature type="zinc finger region" description="C2H2-type 7" evidence="1">
    <location>
        <begin position="361"/>
        <end position="383"/>
    </location>
</feature>
<feature type="zinc finger region" description="C2H2-type 8" evidence="1">
    <location>
        <begin position="389"/>
        <end position="411"/>
    </location>
</feature>
<feature type="zinc finger region" description="C2H2-type 9" evidence="1">
    <location>
        <begin position="417"/>
        <end position="439"/>
    </location>
</feature>
<feature type="zinc finger region" description="C2H2-type 10" evidence="1">
    <location>
        <begin position="445"/>
        <end position="467"/>
    </location>
</feature>
<feature type="zinc finger region" description="C2H2-type 11" evidence="1">
    <location>
        <begin position="473"/>
        <end position="495"/>
    </location>
</feature>
<feature type="region of interest" description="Disordered" evidence="3">
    <location>
        <begin position="1"/>
        <end position="23"/>
    </location>
</feature>
<feature type="sequence variant" id="VAR_024841" description="In dbSNP:rs13292096." evidence="4 5">
    <original>T</original>
    <variation>I</variation>
    <location>
        <position position="31"/>
    </location>
</feature>
<feature type="sequence variant" id="VAR_024842" description="In dbSNP:rs4504745." evidence="4 5">
    <original>R</original>
    <variation>G</variation>
    <location>
        <position position="51"/>
    </location>
</feature>
<feature type="sequence variant" id="VAR_059896" description="In dbSNP:rs3210752.">
    <original>S</original>
    <variation>N</variation>
    <location>
        <position position="401"/>
    </location>
</feature>
<feature type="sequence conflict" description="In Ref. 4; CAA46339." evidence="6" ref="4">
    <original>C</original>
    <variation>G</variation>
    <location>
        <position position="345"/>
    </location>
</feature>
<feature type="sequence conflict" description="In Ref. 4; CAA46339." evidence="6" ref="4">
    <location>
        <begin position="375"/>
        <end position="377"/>
    </location>
</feature>